<feature type="chain" id="PRO_0000030266" description="Protein RecA, 1st part" evidence="2">
    <location>
        <begin position="1" status="less than"/>
        <end position="9"/>
    </location>
</feature>
<feature type="chain" id="PRO_0000030267" description="Mth RecA intein" evidence="2">
    <location>
        <begin position="10"/>
        <end position="374"/>
    </location>
</feature>
<feature type="chain" id="PRO_0000030268" description="Protein RecA, 2nd part" evidence="2">
    <location>
        <begin position="375"/>
        <end position="424" status="greater than"/>
    </location>
</feature>
<feature type="non-terminal residue">
    <location>
        <position position="1"/>
    </location>
</feature>
<feature type="non-terminal residue">
    <location>
        <position position="424"/>
    </location>
</feature>
<dbReference type="EMBL" id="AJ251714">
    <property type="protein sequence ID" value="CAC09593.1"/>
    <property type="molecule type" value="Genomic_DNA"/>
</dbReference>
<dbReference type="eggNOG" id="COG0468">
    <property type="taxonomic scope" value="Bacteria"/>
</dbReference>
<dbReference type="eggNOG" id="COG1372">
    <property type="taxonomic scope" value="Bacteria"/>
</dbReference>
<dbReference type="GO" id="GO:0005829">
    <property type="term" value="C:cytosol"/>
    <property type="evidence" value="ECO:0007669"/>
    <property type="project" value="TreeGrafter"/>
</dbReference>
<dbReference type="GO" id="GO:0005524">
    <property type="term" value="F:ATP binding"/>
    <property type="evidence" value="ECO:0007669"/>
    <property type="project" value="UniProtKB-KW"/>
</dbReference>
<dbReference type="GO" id="GO:0008094">
    <property type="term" value="F:ATP-dependent activity, acting on DNA"/>
    <property type="evidence" value="ECO:0007669"/>
    <property type="project" value="InterPro"/>
</dbReference>
<dbReference type="GO" id="GO:0004519">
    <property type="term" value="F:endonuclease activity"/>
    <property type="evidence" value="ECO:0007669"/>
    <property type="project" value="InterPro"/>
</dbReference>
<dbReference type="GO" id="GO:0003697">
    <property type="term" value="F:single-stranded DNA binding"/>
    <property type="evidence" value="ECO:0007669"/>
    <property type="project" value="InterPro"/>
</dbReference>
<dbReference type="GO" id="GO:0006310">
    <property type="term" value="P:DNA recombination"/>
    <property type="evidence" value="ECO:0007669"/>
    <property type="project" value="UniProtKB-KW"/>
</dbReference>
<dbReference type="GO" id="GO:0006281">
    <property type="term" value="P:DNA repair"/>
    <property type="evidence" value="ECO:0007669"/>
    <property type="project" value="UniProtKB-KW"/>
</dbReference>
<dbReference type="GO" id="GO:0016539">
    <property type="term" value="P:intein-mediated protein splicing"/>
    <property type="evidence" value="ECO:0007669"/>
    <property type="project" value="InterPro"/>
</dbReference>
<dbReference type="GO" id="GO:0009432">
    <property type="term" value="P:SOS response"/>
    <property type="evidence" value="ECO:0007669"/>
    <property type="project" value="UniProtKB-KW"/>
</dbReference>
<dbReference type="CDD" id="cd00081">
    <property type="entry name" value="Hint"/>
    <property type="match status" value="2"/>
</dbReference>
<dbReference type="Gene3D" id="2.170.16.10">
    <property type="entry name" value="Hedgehog/Intein (Hint) domain"/>
    <property type="match status" value="1"/>
</dbReference>
<dbReference type="Gene3D" id="3.10.28.10">
    <property type="entry name" value="Homing endonucleases"/>
    <property type="match status" value="2"/>
</dbReference>
<dbReference type="Gene3D" id="3.40.50.300">
    <property type="entry name" value="P-loop containing nucleotide triphosphate hydrolases"/>
    <property type="match status" value="1"/>
</dbReference>
<dbReference type="InterPro" id="IPR013765">
    <property type="entry name" value="DNA_recomb/repair_RecA"/>
</dbReference>
<dbReference type="InterPro" id="IPR020584">
    <property type="entry name" value="DNA_recomb/repair_RecA_CS"/>
</dbReference>
<dbReference type="InterPro" id="IPR003586">
    <property type="entry name" value="Hint_dom_C"/>
</dbReference>
<dbReference type="InterPro" id="IPR003587">
    <property type="entry name" value="Hint_dom_N"/>
</dbReference>
<dbReference type="InterPro" id="IPR036844">
    <property type="entry name" value="Hint_dom_sf"/>
</dbReference>
<dbReference type="InterPro" id="IPR027434">
    <property type="entry name" value="Homing_endonucl"/>
</dbReference>
<dbReference type="InterPro" id="IPR030934">
    <property type="entry name" value="Intein_C"/>
</dbReference>
<dbReference type="InterPro" id="IPR006141">
    <property type="entry name" value="Intein_N"/>
</dbReference>
<dbReference type="InterPro" id="IPR004860">
    <property type="entry name" value="LAGLIDADG_dom"/>
</dbReference>
<dbReference type="InterPro" id="IPR027417">
    <property type="entry name" value="P-loop_NTPase"/>
</dbReference>
<dbReference type="InterPro" id="IPR049428">
    <property type="entry name" value="RecA-like_N"/>
</dbReference>
<dbReference type="InterPro" id="IPR020587">
    <property type="entry name" value="RecA_monomer-monomer_interface"/>
</dbReference>
<dbReference type="NCBIfam" id="TIGR01443">
    <property type="entry name" value="intein_Cterm"/>
    <property type="match status" value="1"/>
</dbReference>
<dbReference type="NCBIfam" id="TIGR01445">
    <property type="entry name" value="intein_Nterm"/>
    <property type="match status" value="1"/>
</dbReference>
<dbReference type="PANTHER" id="PTHR45900:SF1">
    <property type="entry name" value="MITOCHONDRIAL DNA REPAIR PROTEIN RECA HOMOLOG-RELATED"/>
    <property type="match status" value="1"/>
</dbReference>
<dbReference type="PANTHER" id="PTHR45900">
    <property type="entry name" value="RECA"/>
    <property type="match status" value="1"/>
</dbReference>
<dbReference type="Pfam" id="PF03161">
    <property type="entry name" value="LAGLIDADG_2"/>
    <property type="match status" value="1"/>
</dbReference>
<dbReference type="Pfam" id="PF00154">
    <property type="entry name" value="RecA"/>
    <property type="match status" value="1"/>
</dbReference>
<dbReference type="PRINTS" id="PR00142">
    <property type="entry name" value="RECA"/>
</dbReference>
<dbReference type="SMART" id="SM00305">
    <property type="entry name" value="HintC"/>
    <property type="match status" value="1"/>
</dbReference>
<dbReference type="SMART" id="SM00306">
    <property type="entry name" value="HintN"/>
    <property type="match status" value="1"/>
</dbReference>
<dbReference type="SUPFAM" id="SSF51294">
    <property type="entry name" value="Hedgehog/intein (Hint) domain"/>
    <property type="match status" value="1"/>
</dbReference>
<dbReference type="SUPFAM" id="SSF55608">
    <property type="entry name" value="Homing endonucleases"/>
    <property type="match status" value="1"/>
</dbReference>
<dbReference type="SUPFAM" id="SSF52540">
    <property type="entry name" value="P-loop containing nucleoside triphosphate hydrolases"/>
    <property type="match status" value="1"/>
</dbReference>
<dbReference type="PROSITE" id="PS50818">
    <property type="entry name" value="INTEIN_C_TER"/>
    <property type="match status" value="1"/>
</dbReference>
<dbReference type="PROSITE" id="PS50817">
    <property type="entry name" value="INTEIN_N_TER"/>
    <property type="match status" value="1"/>
</dbReference>
<dbReference type="PROSITE" id="PS00321">
    <property type="entry name" value="RECA_1"/>
    <property type="match status" value="1"/>
</dbReference>
<dbReference type="PROSITE" id="PS50163">
    <property type="entry name" value="RECA_3"/>
    <property type="match status" value="1"/>
</dbReference>
<accession>Q9F407</accession>
<protein>
    <recommendedName>
        <fullName>Protein RecA</fullName>
    </recommendedName>
    <alternativeName>
        <fullName>Recombinase A</fullName>
    </alternativeName>
    <component>
        <recommendedName>
            <fullName>Mth RecA intein</fullName>
        </recommendedName>
    </component>
</protein>
<sequence>REKIGVMFGCFDYSTRAQLADGTTEKIGKIVDNKMDVEVLSYDPDTDRIVPRKVVNWFNNGPAEQLLQFTVEKSGGNGRARFAATPNHLIRTPGGWTEAGDLIAGDRVLAAEPHRLSDQQFQIVLGSLMGDGTLSPDPRGRNGVRFRMGHGADRVDYLEWKTALLGNIKHSTGENAEGARFVDFTPLPELAELRRAVYLGDDGRKFISEEYLKALTPLALAIWYMDDGSLTVRSEGLQQGTAGGSGRIEICVEAMTEGSRIRLRDHLRDTHGLDVRLRQAGAGGKAVLVFSTAATAEFQELVAPYMAPSMEYKLLPRFRGQSRVVPQFVEPTQRLVPARILDVHVEPHTRSMNRYDIEVEGNHNYFVDGVMVHNSPETTTGGKALKFYASVRIDVRRIETLKDGTEAVGNRTRAKIVKNKVSPP</sequence>
<gene>
    <name type="primary">recA</name>
</gene>
<name>RECA_MYCT3</name>
<comment type="function">
    <text evidence="1">Can catalyze the hydrolysis of ATP in the presence of single-stranded DNA, the ATP-dependent uptake of single-stranded DNA by duplex DNA, and the ATP-dependent hybridization of homologous single-stranded DNAs. It interacts with LexA causing its activation and leading to its autocatalytic cleavage (By similarity).</text>
</comment>
<comment type="subcellular location">
    <subcellularLocation>
        <location evidence="1">Cytoplasm</location>
    </subcellularLocation>
</comment>
<comment type="PTM">
    <text evidence="1">This protein undergoes a protein self splicing that involves a post-translational excision of the intervening region (intein) followed by peptide ligation.</text>
</comment>
<comment type="similarity">
    <text evidence="3">Belongs to the RecA family.</text>
</comment>
<organism>
    <name type="scientific">Mycolicibacterium thermoresistibile (strain ATCC 19527 / DSM 44167 / CIP 105390 / JCM 6362 / NCTC 10409 / 316)</name>
    <name type="common">Mycobacterium thermoresistibile</name>
    <dbReference type="NCBI Taxonomy" id="1078020"/>
    <lineage>
        <taxon>Bacteria</taxon>
        <taxon>Bacillati</taxon>
        <taxon>Actinomycetota</taxon>
        <taxon>Actinomycetes</taxon>
        <taxon>Mycobacteriales</taxon>
        <taxon>Mycobacteriaceae</taxon>
        <taxon>Mycolicibacterium</taxon>
    </lineage>
</organism>
<proteinExistence type="inferred from homology"/>
<reference key="1">
    <citation type="journal article" date="2000" name="FEBS Lett.">
        <title>Inteins invading mycobacterial RecA proteins.</title>
        <authorList>
            <person name="Saves I."/>
            <person name="Laneelle M.-A."/>
            <person name="Daffe M."/>
            <person name="Masson J.-M."/>
        </authorList>
    </citation>
    <scope>NUCLEOTIDE SEQUENCE [GENOMIC DNA]</scope>
    <source>
        <strain>ATCC 19527 / DSM 44167 / CIP 105390 / JCM 6362 / NCTC 10409 / 316</strain>
    </source>
</reference>
<evidence type="ECO:0000250" key="1"/>
<evidence type="ECO:0000255" key="2"/>
<evidence type="ECO:0000305" key="3"/>
<keyword id="KW-0067">ATP-binding</keyword>
<keyword id="KW-0068">Autocatalytic cleavage</keyword>
<keyword id="KW-0963">Cytoplasm</keyword>
<keyword id="KW-0227">DNA damage</keyword>
<keyword id="KW-0233">DNA recombination</keyword>
<keyword id="KW-0234">DNA repair</keyword>
<keyword id="KW-0238">DNA-binding</keyword>
<keyword id="KW-0547">Nucleotide-binding</keyword>
<keyword id="KW-0651">Protein splicing</keyword>
<keyword id="KW-0742">SOS response</keyword>